<protein>
    <recommendedName>
        <fullName evidence="1">Global transcriptional regulator CodY</fullName>
    </recommendedName>
</protein>
<accession>B9DVH6</accession>
<comment type="function">
    <text evidence="1">DNA-binding global transcriptional regulator which is involved in the adaptive response to starvation and acts by directly or indirectly controlling the expression of numerous genes in response to nutrient availability. During rapid exponential growth, CodY is highly active and represses genes whose products allow adaptation to nutrient depletion.</text>
</comment>
<comment type="subcellular location">
    <subcellularLocation>
        <location evidence="1">Cytoplasm</location>
    </subcellularLocation>
</comment>
<comment type="similarity">
    <text evidence="1">Belongs to the CodY family.</text>
</comment>
<organism>
    <name type="scientific">Streptococcus uberis (strain ATCC BAA-854 / 0140J)</name>
    <dbReference type="NCBI Taxonomy" id="218495"/>
    <lineage>
        <taxon>Bacteria</taxon>
        <taxon>Bacillati</taxon>
        <taxon>Bacillota</taxon>
        <taxon>Bacilli</taxon>
        <taxon>Lactobacillales</taxon>
        <taxon>Streptococcaceae</taxon>
        <taxon>Streptococcus</taxon>
    </lineage>
</organism>
<name>CODY_STRU0</name>
<feature type="chain" id="PRO_1000147211" description="Global transcriptional regulator CodY">
    <location>
        <begin position="1"/>
        <end position="260"/>
    </location>
</feature>
<feature type="DNA-binding region" description="H-T-H motif" evidence="1">
    <location>
        <begin position="207"/>
        <end position="226"/>
    </location>
</feature>
<feature type="region of interest" description="GAF domain" evidence="1">
    <location>
        <begin position="1"/>
        <end position="159"/>
    </location>
</feature>
<keyword id="KW-0963">Cytoplasm</keyword>
<keyword id="KW-0238">DNA-binding</keyword>
<keyword id="KW-1185">Reference proteome</keyword>
<keyword id="KW-0678">Repressor</keyword>
<keyword id="KW-0804">Transcription</keyword>
<keyword id="KW-0805">Transcription regulation</keyword>
<sequence>MPNLLEKTRKITSILQRSVDSLDAELPYNAMASRLADIIDCNACIINGGGTLLGYAMKYKTNNDRVEEFFEAKQFPDSYVKAASRVYDTEANLPVENELTIFPIESKNTYPDGLTTIAPIYGGGMRLGSLIIWRNDKKFLDEDLILVEISSTVVGIQLLNLQTENLEETIRKQTAVNMAINTLSYSEMKAVAAILGELDGNEGRLTASVIADRIGITRSVIVNALRKLESAGIIESRSLGMKGTYLKVINEGIFDKLKEF</sequence>
<proteinExistence type="inferred from homology"/>
<gene>
    <name evidence="1" type="primary">codY</name>
    <name type="ordered locus">SUB1528</name>
</gene>
<dbReference type="EMBL" id="AM946015">
    <property type="protein sequence ID" value="CAR43273.1"/>
    <property type="molecule type" value="Genomic_DNA"/>
</dbReference>
<dbReference type="RefSeq" id="WP_015911836.1">
    <property type="nucleotide sequence ID" value="NC_012004.1"/>
</dbReference>
<dbReference type="SMR" id="B9DVH6"/>
<dbReference type="STRING" id="218495.SUB1528"/>
<dbReference type="KEGG" id="sub:SUB1528"/>
<dbReference type="eggNOG" id="COG4465">
    <property type="taxonomic scope" value="Bacteria"/>
</dbReference>
<dbReference type="HOGENOM" id="CLU_089581_0_0_9"/>
<dbReference type="OrthoDB" id="2056at2"/>
<dbReference type="Proteomes" id="UP000000449">
    <property type="component" value="Chromosome"/>
</dbReference>
<dbReference type="GO" id="GO:0005737">
    <property type="term" value="C:cytoplasm"/>
    <property type="evidence" value="ECO:0007669"/>
    <property type="project" value="UniProtKB-SubCell"/>
</dbReference>
<dbReference type="GO" id="GO:0003677">
    <property type="term" value="F:DNA binding"/>
    <property type="evidence" value="ECO:0007669"/>
    <property type="project" value="UniProtKB-UniRule"/>
</dbReference>
<dbReference type="GO" id="GO:0003700">
    <property type="term" value="F:DNA-binding transcription factor activity"/>
    <property type="evidence" value="ECO:0007669"/>
    <property type="project" value="InterPro"/>
</dbReference>
<dbReference type="GO" id="GO:0005525">
    <property type="term" value="F:GTP binding"/>
    <property type="evidence" value="ECO:0007669"/>
    <property type="project" value="InterPro"/>
</dbReference>
<dbReference type="GO" id="GO:0045892">
    <property type="term" value="P:negative regulation of DNA-templated transcription"/>
    <property type="evidence" value="ECO:0007669"/>
    <property type="project" value="UniProtKB-UniRule"/>
</dbReference>
<dbReference type="CDD" id="cd00090">
    <property type="entry name" value="HTH_ARSR"/>
    <property type="match status" value="1"/>
</dbReference>
<dbReference type="FunFam" id="1.10.10.10:FF:000034">
    <property type="entry name" value="GTP-sensing transcriptional pleiotropic repressor CodY"/>
    <property type="match status" value="1"/>
</dbReference>
<dbReference type="FunFam" id="3.30.450.40:FF:000003">
    <property type="entry name" value="GTP-sensing transcriptional pleiotropic repressor CodY"/>
    <property type="match status" value="1"/>
</dbReference>
<dbReference type="Gene3D" id="3.30.450.40">
    <property type="match status" value="1"/>
</dbReference>
<dbReference type="Gene3D" id="1.10.10.10">
    <property type="entry name" value="Winged helix-like DNA-binding domain superfamily/Winged helix DNA-binding domain"/>
    <property type="match status" value="1"/>
</dbReference>
<dbReference type="HAMAP" id="MF_00621">
    <property type="entry name" value="HTH_type_CodY"/>
    <property type="match status" value="1"/>
</dbReference>
<dbReference type="InterPro" id="IPR011991">
    <property type="entry name" value="ArsR-like_HTH"/>
</dbReference>
<dbReference type="InterPro" id="IPR014154">
    <property type="entry name" value="CodY"/>
</dbReference>
<dbReference type="InterPro" id="IPR029016">
    <property type="entry name" value="GAF-like_dom_sf"/>
</dbReference>
<dbReference type="InterPro" id="IPR013198">
    <property type="entry name" value="GTP_trans_reg_CodY_C"/>
</dbReference>
<dbReference type="InterPro" id="IPR010312">
    <property type="entry name" value="Transc_reg_CodY_N"/>
</dbReference>
<dbReference type="InterPro" id="IPR036388">
    <property type="entry name" value="WH-like_DNA-bd_sf"/>
</dbReference>
<dbReference type="InterPro" id="IPR036390">
    <property type="entry name" value="WH_DNA-bd_sf"/>
</dbReference>
<dbReference type="NCBIfam" id="TIGR02787">
    <property type="entry name" value="codY_Gpos"/>
    <property type="match status" value="1"/>
</dbReference>
<dbReference type="NCBIfam" id="NF003170">
    <property type="entry name" value="PRK04158.1"/>
    <property type="match status" value="1"/>
</dbReference>
<dbReference type="PANTHER" id="PTHR40062:SF1">
    <property type="entry name" value="GLOBAL TRANSCRIPTIONAL REGULATOR CODY"/>
    <property type="match status" value="1"/>
</dbReference>
<dbReference type="PANTHER" id="PTHR40062">
    <property type="entry name" value="GTP-SENSING TRANSCRIPTIONAL PLEIOTROPIC REPRESSOR CODY"/>
    <property type="match status" value="1"/>
</dbReference>
<dbReference type="Pfam" id="PF06018">
    <property type="entry name" value="CodY"/>
    <property type="match status" value="1"/>
</dbReference>
<dbReference type="Pfam" id="PF08222">
    <property type="entry name" value="HTH_CodY"/>
    <property type="match status" value="1"/>
</dbReference>
<dbReference type="PIRSF" id="PIRSF011572">
    <property type="entry name" value="GTP_sensing_CodY"/>
    <property type="match status" value="1"/>
</dbReference>
<dbReference type="SUPFAM" id="SSF46785">
    <property type="entry name" value="Winged helix' DNA-binding domain"/>
    <property type="match status" value="1"/>
</dbReference>
<evidence type="ECO:0000255" key="1">
    <source>
        <dbReference type="HAMAP-Rule" id="MF_00621"/>
    </source>
</evidence>
<reference key="1">
    <citation type="journal article" date="2009" name="BMC Genomics">
        <title>Evidence for niche adaptation in the genome of the bovine pathogen Streptococcus uberis.</title>
        <authorList>
            <person name="Ward P.N."/>
            <person name="Holden M.T.G."/>
            <person name="Leigh J.A."/>
            <person name="Lennard N."/>
            <person name="Bignell A."/>
            <person name="Barron A."/>
            <person name="Clark L."/>
            <person name="Quail M.A."/>
            <person name="Woodward J."/>
            <person name="Barrell B.G."/>
            <person name="Egan S.A."/>
            <person name="Field T.R."/>
            <person name="Maskell D."/>
            <person name="Kehoe M."/>
            <person name="Dowson C.G."/>
            <person name="Chanter N."/>
            <person name="Whatmore A.M."/>
            <person name="Bentley S.D."/>
            <person name="Parkhill J."/>
        </authorList>
    </citation>
    <scope>NUCLEOTIDE SEQUENCE [LARGE SCALE GENOMIC DNA]</scope>
    <source>
        <strain>ATCC BAA-854 / 0140J</strain>
    </source>
</reference>